<accession>Q57AM8</accession>
<evidence type="ECO:0000255" key="1">
    <source>
        <dbReference type="HAMAP-Rule" id="MF_00109"/>
    </source>
</evidence>
<dbReference type="EC" id="2.7.1.71" evidence="1"/>
<dbReference type="EMBL" id="AE017223">
    <property type="protein sequence ID" value="AAX75306.1"/>
    <property type="molecule type" value="Genomic_DNA"/>
</dbReference>
<dbReference type="RefSeq" id="WP_002971869.1">
    <property type="nucleotide sequence ID" value="NC_006932.1"/>
</dbReference>
<dbReference type="SMR" id="Q57AM8"/>
<dbReference type="EnsemblBacteria" id="AAX75306">
    <property type="protein sequence ID" value="AAX75306"/>
    <property type="gene ID" value="BruAb1_2004"/>
</dbReference>
<dbReference type="KEGG" id="bmb:BruAb1_2004"/>
<dbReference type="HOGENOM" id="CLU_057607_2_0_5"/>
<dbReference type="UniPathway" id="UPA00053">
    <property type="reaction ID" value="UER00088"/>
</dbReference>
<dbReference type="Proteomes" id="UP000000540">
    <property type="component" value="Chromosome I"/>
</dbReference>
<dbReference type="GO" id="GO:0005829">
    <property type="term" value="C:cytosol"/>
    <property type="evidence" value="ECO:0007669"/>
    <property type="project" value="TreeGrafter"/>
</dbReference>
<dbReference type="GO" id="GO:0005524">
    <property type="term" value="F:ATP binding"/>
    <property type="evidence" value="ECO:0007669"/>
    <property type="project" value="UniProtKB-UniRule"/>
</dbReference>
<dbReference type="GO" id="GO:0000287">
    <property type="term" value="F:magnesium ion binding"/>
    <property type="evidence" value="ECO:0007669"/>
    <property type="project" value="UniProtKB-UniRule"/>
</dbReference>
<dbReference type="GO" id="GO:0004765">
    <property type="term" value="F:shikimate kinase activity"/>
    <property type="evidence" value="ECO:0007669"/>
    <property type="project" value="UniProtKB-UniRule"/>
</dbReference>
<dbReference type="GO" id="GO:0008652">
    <property type="term" value="P:amino acid biosynthetic process"/>
    <property type="evidence" value="ECO:0007669"/>
    <property type="project" value="UniProtKB-KW"/>
</dbReference>
<dbReference type="GO" id="GO:0009073">
    <property type="term" value="P:aromatic amino acid family biosynthetic process"/>
    <property type="evidence" value="ECO:0007669"/>
    <property type="project" value="UniProtKB-KW"/>
</dbReference>
<dbReference type="GO" id="GO:0009423">
    <property type="term" value="P:chorismate biosynthetic process"/>
    <property type="evidence" value="ECO:0007669"/>
    <property type="project" value="UniProtKB-UniRule"/>
</dbReference>
<dbReference type="CDD" id="cd00464">
    <property type="entry name" value="SK"/>
    <property type="match status" value="1"/>
</dbReference>
<dbReference type="Gene3D" id="3.40.50.300">
    <property type="entry name" value="P-loop containing nucleotide triphosphate hydrolases"/>
    <property type="match status" value="1"/>
</dbReference>
<dbReference type="HAMAP" id="MF_00109">
    <property type="entry name" value="Shikimate_kinase"/>
    <property type="match status" value="1"/>
</dbReference>
<dbReference type="InterPro" id="IPR027417">
    <property type="entry name" value="P-loop_NTPase"/>
</dbReference>
<dbReference type="InterPro" id="IPR031322">
    <property type="entry name" value="Shikimate/glucono_kinase"/>
</dbReference>
<dbReference type="InterPro" id="IPR000623">
    <property type="entry name" value="Shikimate_kinase/TSH1"/>
</dbReference>
<dbReference type="NCBIfam" id="NF010552">
    <property type="entry name" value="PRK13946.1"/>
    <property type="match status" value="1"/>
</dbReference>
<dbReference type="PANTHER" id="PTHR21087">
    <property type="entry name" value="SHIKIMATE KINASE"/>
    <property type="match status" value="1"/>
</dbReference>
<dbReference type="PANTHER" id="PTHR21087:SF16">
    <property type="entry name" value="SHIKIMATE KINASE 1, CHLOROPLASTIC"/>
    <property type="match status" value="1"/>
</dbReference>
<dbReference type="Pfam" id="PF01202">
    <property type="entry name" value="SKI"/>
    <property type="match status" value="1"/>
</dbReference>
<dbReference type="PRINTS" id="PR01100">
    <property type="entry name" value="SHIKIMTKNASE"/>
</dbReference>
<dbReference type="SUPFAM" id="SSF52540">
    <property type="entry name" value="P-loop containing nucleoside triphosphate hydrolases"/>
    <property type="match status" value="1"/>
</dbReference>
<organism>
    <name type="scientific">Brucella abortus biovar 1 (strain 9-941)</name>
    <dbReference type="NCBI Taxonomy" id="262698"/>
    <lineage>
        <taxon>Bacteria</taxon>
        <taxon>Pseudomonadati</taxon>
        <taxon>Pseudomonadota</taxon>
        <taxon>Alphaproteobacteria</taxon>
        <taxon>Hyphomicrobiales</taxon>
        <taxon>Brucellaceae</taxon>
        <taxon>Brucella/Ochrobactrum group</taxon>
        <taxon>Brucella</taxon>
    </lineage>
</organism>
<feature type="chain" id="PRO_0000237854" description="Shikimate kinase">
    <location>
        <begin position="1"/>
        <end position="200"/>
    </location>
</feature>
<feature type="binding site" evidence="1">
    <location>
        <begin position="33"/>
        <end position="38"/>
    </location>
    <ligand>
        <name>ATP</name>
        <dbReference type="ChEBI" id="CHEBI:30616"/>
    </ligand>
</feature>
<feature type="binding site" evidence="1">
    <location>
        <position position="37"/>
    </location>
    <ligand>
        <name>Mg(2+)</name>
        <dbReference type="ChEBI" id="CHEBI:18420"/>
    </ligand>
</feature>
<feature type="binding site" evidence="1">
    <location>
        <position position="55"/>
    </location>
    <ligand>
        <name>substrate</name>
    </ligand>
</feature>
<feature type="binding site" evidence="1">
    <location>
        <position position="79"/>
    </location>
    <ligand>
        <name>substrate</name>
    </ligand>
</feature>
<feature type="binding site" evidence="1">
    <location>
        <position position="101"/>
    </location>
    <ligand>
        <name>substrate</name>
    </ligand>
</feature>
<feature type="binding site" evidence="1">
    <location>
        <position position="139"/>
    </location>
    <ligand>
        <name>ATP</name>
        <dbReference type="ChEBI" id="CHEBI:30616"/>
    </ligand>
</feature>
<feature type="binding site" evidence="1">
    <location>
        <position position="158"/>
    </location>
    <ligand>
        <name>substrate</name>
    </ligand>
</feature>
<reference key="1">
    <citation type="journal article" date="2005" name="J. Bacteriol.">
        <title>Completion of the genome sequence of Brucella abortus and comparison to the highly similar genomes of Brucella melitensis and Brucella suis.</title>
        <authorList>
            <person name="Halling S.M."/>
            <person name="Peterson-Burch B.D."/>
            <person name="Bricker B.J."/>
            <person name="Zuerner R.L."/>
            <person name="Qing Z."/>
            <person name="Li L.-L."/>
            <person name="Kapur V."/>
            <person name="Alt D.P."/>
            <person name="Olsen S.C."/>
        </authorList>
    </citation>
    <scope>NUCLEOTIDE SEQUENCE [LARGE SCALE GENOMIC DNA]</scope>
    <source>
        <strain>9-941</strain>
    </source>
</reference>
<gene>
    <name evidence="1" type="primary">aroK</name>
    <name type="ordered locus">BruAb1_2004</name>
</gene>
<keyword id="KW-0028">Amino-acid biosynthesis</keyword>
<keyword id="KW-0057">Aromatic amino acid biosynthesis</keyword>
<keyword id="KW-0067">ATP-binding</keyword>
<keyword id="KW-0963">Cytoplasm</keyword>
<keyword id="KW-0418">Kinase</keyword>
<keyword id="KW-0460">Magnesium</keyword>
<keyword id="KW-0479">Metal-binding</keyword>
<keyword id="KW-0547">Nucleotide-binding</keyword>
<keyword id="KW-0808">Transferase</keyword>
<protein>
    <recommendedName>
        <fullName evidence="1">Shikimate kinase</fullName>
        <shortName evidence="1">SK</shortName>
        <ecNumber evidence="1">2.7.1.71</ecNumber>
    </recommendedName>
</protein>
<sequence>MSGTNKQTNLHRQTETIRQLLGSKVVVLVGLMGAGKSTIGRKVANMLNLPFKDADTEIETVSRMTVAELFEAYGEVEFRDLERRVILRLLDDGPMVLATGGGAYMNAETRAAIAEAGISIWINADLDVLMERVSRRQNRPLLRNSDPRGVMQRLMDERYPVYALAELHLMTRDEKKEVIAAELIEVLAAHLEKEQAASAG</sequence>
<name>AROK_BRUAB</name>
<comment type="function">
    <text evidence="1">Catalyzes the specific phosphorylation of the 3-hydroxyl group of shikimic acid using ATP as a cosubstrate.</text>
</comment>
<comment type="catalytic activity">
    <reaction evidence="1">
        <text>shikimate + ATP = 3-phosphoshikimate + ADP + H(+)</text>
        <dbReference type="Rhea" id="RHEA:13121"/>
        <dbReference type="ChEBI" id="CHEBI:15378"/>
        <dbReference type="ChEBI" id="CHEBI:30616"/>
        <dbReference type="ChEBI" id="CHEBI:36208"/>
        <dbReference type="ChEBI" id="CHEBI:145989"/>
        <dbReference type="ChEBI" id="CHEBI:456216"/>
        <dbReference type="EC" id="2.7.1.71"/>
    </reaction>
</comment>
<comment type="cofactor">
    <cofactor evidence="1">
        <name>Mg(2+)</name>
        <dbReference type="ChEBI" id="CHEBI:18420"/>
    </cofactor>
    <text evidence="1">Binds 1 Mg(2+) ion per subunit.</text>
</comment>
<comment type="pathway">
    <text evidence="1">Metabolic intermediate biosynthesis; chorismate biosynthesis; chorismate from D-erythrose 4-phosphate and phosphoenolpyruvate: step 5/7.</text>
</comment>
<comment type="subunit">
    <text evidence="1">Monomer.</text>
</comment>
<comment type="subcellular location">
    <subcellularLocation>
        <location evidence="1">Cytoplasm</location>
    </subcellularLocation>
</comment>
<comment type="similarity">
    <text evidence="1">Belongs to the shikimate kinase family.</text>
</comment>
<proteinExistence type="inferred from homology"/>